<keyword id="KW-0963">Cytoplasm</keyword>
<keyword id="KW-0444">Lipid biosynthesis</keyword>
<keyword id="KW-0443">Lipid metabolism</keyword>
<keyword id="KW-0520">NAD</keyword>
<keyword id="KW-0521">NADP</keyword>
<keyword id="KW-0547">Nucleotide-binding</keyword>
<keyword id="KW-0560">Oxidoreductase</keyword>
<keyword id="KW-0594">Phospholipid biosynthesis</keyword>
<keyword id="KW-1208">Phospholipid metabolism</keyword>
<comment type="function">
    <text evidence="1">Catalyzes the reduction of the glycolytic intermediate dihydroxyacetone phosphate (DHAP) to sn-glycerol 3-phosphate (G3P), the key precursor for phospholipid synthesis.</text>
</comment>
<comment type="catalytic activity">
    <reaction evidence="1">
        <text>sn-glycerol 3-phosphate + NAD(+) = dihydroxyacetone phosphate + NADH + H(+)</text>
        <dbReference type="Rhea" id="RHEA:11092"/>
        <dbReference type="ChEBI" id="CHEBI:15378"/>
        <dbReference type="ChEBI" id="CHEBI:57540"/>
        <dbReference type="ChEBI" id="CHEBI:57597"/>
        <dbReference type="ChEBI" id="CHEBI:57642"/>
        <dbReference type="ChEBI" id="CHEBI:57945"/>
        <dbReference type="EC" id="1.1.1.94"/>
    </reaction>
    <physiologicalReaction direction="right-to-left" evidence="1">
        <dbReference type="Rhea" id="RHEA:11094"/>
    </physiologicalReaction>
</comment>
<comment type="catalytic activity">
    <reaction evidence="1">
        <text>sn-glycerol 3-phosphate + NADP(+) = dihydroxyacetone phosphate + NADPH + H(+)</text>
        <dbReference type="Rhea" id="RHEA:11096"/>
        <dbReference type="ChEBI" id="CHEBI:15378"/>
        <dbReference type="ChEBI" id="CHEBI:57597"/>
        <dbReference type="ChEBI" id="CHEBI:57642"/>
        <dbReference type="ChEBI" id="CHEBI:57783"/>
        <dbReference type="ChEBI" id="CHEBI:58349"/>
        <dbReference type="EC" id="1.1.1.94"/>
    </reaction>
    <physiologicalReaction direction="right-to-left" evidence="1">
        <dbReference type="Rhea" id="RHEA:11098"/>
    </physiologicalReaction>
</comment>
<comment type="pathway">
    <text evidence="1">Membrane lipid metabolism; glycerophospholipid metabolism.</text>
</comment>
<comment type="subcellular location">
    <subcellularLocation>
        <location evidence="1">Cytoplasm</location>
    </subcellularLocation>
</comment>
<comment type="similarity">
    <text evidence="1">Belongs to the NAD-dependent glycerol-3-phosphate dehydrogenase family.</text>
</comment>
<sequence length="341" mass="36540">MTQQRPIAVLGGGSFGTAVANLLAENGHRVRQWMRDPEQAEAIRVNRENPRYLKGIKIHPAVEPVTDLLATLNDSDLCFVALPSSALRSVLAPHAELLRGKLLVSLTKGIEAQTFKLMSEILQDIAPQARIGVLSGPNLAREVAEHALTATVVASEDEELCQRVQAALHGRTFRVYASADRFGVELGGALKNVYAIIAGMAVALGMGENTKSMLITRALAEMTRFAVSQGANPMTFLGLAGVGDLIVTCSSPKSRNYQVGFALGQGLSLEEAVTRLGEVAEGVNTLKVLKVKAQELGVYMPLVAGLHAILFEGRTLNQVIELLMRGEPKTDVDFISTSGFN</sequence>
<evidence type="ECO:0000255" key="1">
    <source>
        <dbReference type="HAMAP-Rule" id="MF_00394"/>
    </source>
</evidence>
<proteinExistence type="inferred from homology"/>
<name>GPDA_PSEF5</name>
<organism>
    <name type="scientific">Pseudomonas fluorescens (strain ATCC BAA-477 / NRRL B-23932 / Pf-5)</name>
    <dbReference type="NCBI Taxonomy" id="220664"/>
    <lineage>
        <taxon>Bacteria</taxon>
        <taxon>Pseudomonadati</taxon>
        <taxon>Pseudomonadota</taxon>
        <taxon>Gammaproteobacteria</taxon>
        <taxon>Pseudomonadales</taxon>
        <taxon>Pseudomonadaceae</taxon>
        <taxon>Pseudomonas</taxon>
    </lineage>
</organism>
<reference key="1">
    <citation type="journal article" date="2005" name="Nat. Biotechnol.">
        <title>Complete genome sequence of the plant commensal Pseudomonas fluorescens Pf-5.</title>
        <authorList>
            <person name="Paulsen I.T."/>
            <person name="Press C.M."/>
            <person name="Ravel J."/>
            <person name="Kobayashi D.Y."/>
            <person name="Myers G.S.A."/>
            <person name="Mavrodi D.V."/>
            <person name="DeBoy R.T."/>
            <person name="Seshadri R."/>
            <person name="Ren Q."/>
            <person name="Madupu R."/>
            <person name="Dodson R.J."/>
            <person name="Durkin A.S."/>
            <person name="Brinkac L.M."/>
            <person name="Daugherty S.C."/>
            <person name="Sullivan S.A."/>
            <person name="Rosovitz M.J."/>
            <person name="Gwinn M.L."/>
            <person name="Zhou L."/>
            <person name="Schneider D.J."/>
            <person name="Cartinhour S.W."/>
            <person name="Nelson W.C."/>
            <person name="Weidman J."/>
            <person name="Watkins K."/>
            <person name="Tran K."/>
            <person name="Khouri H."/>
            <person name="Pierson E.A."/>
            <person name="Pierson L.S. III"/>
            <person name="Thomashow L.S."/>
            <person name="Loper J.E."/>
        </authorList>
    </citation>
    <scope>NUCLEOTIDE SEQUENCE [LARGE SCALE GENOMIC DNA]</scope>
    <source>
        <strain>ATCC BAA-477 / NRRL B-23932 / Pf-5</strain>
    </source>
</reference>
<protein>
    <recommendedName>
        <fullName evidence="1">Glycerol-3-phosphate dehydrogenase [NAD(P)+]</fullName>
        <ecNumber evidence="1">1.1.1.94</ecNumber>
    </recommendedName>
    <alternativeName>
        <fullName evidence="1">NAD(P)(+)-dependent glycerol-3-phosphate dehydrogenase</fullName>
    </alternativeName>
    <alternativeName>
        <fullName evidence="1">NAD(P)H-dependent dihydroxyacetone-phosphate reductase</fullName>
    </alternativeName>
</protein>
<accession>Q4KFW6</accession>
<dbReference type="EC" id="1.1.1.94" evidence="1"/>
<dbReference type="EMBL" id="CP000076">
    <property type="protein sequence ID" value="AAY91036.1"/>
    <property type="molecule type" value="Genomic_DNA"/>
</dbReference>
<dbReference type="RefSeq" id="WP_011060071.1">
    <property type="nucleotide sequence ID" value="NC_004129.6"/>
</dbReference>
<dbReference type="SMR" id="Q4KFW6"/>
<dbReference type="STRING" id="220664.PFL_1741"/>
<dbReference type="KEGG" id="pfl:PFL_1741"/>
<dbReference type="PATRIC" id="fig|220664.5.peg.1780"/>
<dbReference type="eggNOG" id="COG0240">
    <property type="taxonomic scope" value="Bacteria"/>
</dbReference>
<dbReference type="HOGENOM" id="CLU_033449_0_2_6"/>
<dbReference type="UniPathway" id="UPA00940"/>
<dbReference type="Proteomes" id="UP000008540">
    <property type="component" value="Chromosome"/>
</dbReference>
<dbReference type="GO" id="GO:0005829">
    <property type="term" value="C:cytosol"/>
    <property type="evidence" value="ECO:0007669"/>
    <property type="project" value="TreeGrafter"/>
</dbReference>
<dbReference type="GO" id="GO:0047952">
    <property type="term" value="F:glycerol-3-phosphate dehydrogenase [NAD(P)+] activity"/>
    <property type="evidence" value="ECO:0007669"/>
    <property type="project" value="UniProtKB-UniRule"/>
</dbReference>
<dbReference type="GO" id="GO:0051287">
    <property type="term" value="F:NAD binding"/>
    <property type="evidence" value="ECO:0007669"/>
    <property type="project" value="InterPro"/>
</dbReference>
<dbReference type="GO" id="GO:0005975">
    <property type="term" value="P:carbohydrate metabolic process"/>
    <property type="evidence" value="ECO:0007669"/>
    <property type="project" value="InterPro"/>
</dbReference>
<dbReference type="GO" id="GO:0046167">
    <property type="term" value="P:glycerol-3-phosphate biosynthetic process"/>
    <property type="evidence" value="ECO:0007669"/>
    <property type="project" value="UniProtKB-UniRule"/>
</dbReference>
<dbReference type="GO" id="GO:0046168">
    <property type="term" value="P:glycerol-3-phosphate catabolic process"/>
    <property type="evidence" value="ECO:0007669"/>
    <property type="project" value="InterPro"/>
</dbReference>
<dbReference type="GO" id="GO:0046474">
    <property type="term" value="P:glycerophospholipid biosynthetic process"/>
    <property type="evidence" value="ECO:0007669"/>
    <property type="project" value="TreeGrafter"/>
</dbReference>
<dbReference type="FunFam" id="1.10.1040.10:FF:000001">
    <property type="entry name" value="Glycerol-3-phosphate dehydrogenase [NAD(P)+]"/>
    <property type="match status" value="1"/>
</dbReference>
<dbReference type="FunFam" id="3.40.50.720:FF:000019">
    <property type="entry name" value="Glycerol-3-phosphate dehydrogenase [NAD(P)+]"/>
    <property type="match status" value="1"/>
</dbReference>
<dbReference type="Gene3D" id="1.10.1040.10">
    <property type="entry name" value="N-(1-d-carboxylethyl)-l-norvaline Dehydrogenase, domain 2"/>
    <property type="match status" value="1"/>
</dbReference>
<dbReference type="Gene3D" id="3.40.50.720">
    <property type="entry name" value="NAD(P)-binding Rossmann-like Domain"/>
    <property type="match status" value="1"/>
</dbReference>
<dbReference type="HAMAP" id="MF_00394">
    <property type="entry name" value="NAD_Glyc3P_dehydrog"/>
    <property type="match status" value="1"/>
</dbReference>
<dbReference type="InterPro" id="IPR008927">
    <property type="entry name" value="6-PGluconate_DH-like_C_sf"/>
</dbReference>
<dbReference type="InterPro" id="IPR013328">
    <property type="entry name" value="6PGD_dom2"/>
</dbReference>
<dbReference type="InterPro" id="IPR006168">
    <property type="entry name" value="G3P_DH_NAD-dep"/>
</dbReference>
<dbReference type="InterPro" id="IPR006109">
    <property type="entry name" value="G3P_DH_NAD-dep_C"/>
</dbReference>
<dbReference type="InterPro" id="IPR011128">
    <property type="entry name" value="G3P_DH_NAD-dep_N"/>
</dbReference>
<dbReference type="InterPro" id="IPR036291">
    <property type="entry name" value="NAD(P)-bd_dom_sf"/>
</dbReference>
<dbReference type="NCBIfam" id="NF000940">
    <property type="entry name" value="PRK00094.1-2"/>
    <property type="match status" value="1"/>
</dbReference>
<dbReference type="NCBIfam" id="NF000942">
    <property type="entry name" value="PRK00094.1-4"/>
    <property type="match status" value="1"/>
</dbReference>
<dbReference type="NCBIfam" id="NF000946">
    <property type="entry name" value="PRK00094.2-4"/>
    <property type="match status" value="1"/>
</dbReference>
<dbReference type="PANTHER" id="PTHR11728">
    <property type="entry name" value="GLYCEROL-3-PHOSPHATE DEHYDROGENASE"/>
    <property type="match status" value="1"/>
</dbReference>
<dbReference type="PANTHER" id="PTHR11728:SF1">
    <property type="entry name" value="GLYCEROL-3-PHOSPHATE DEHYDROGENASE [NAD(+)] 2, CHLOROPLASTIC"/>
    <property type="match status" value="1"/>
</dbReference>
<dbReference type="Pfam" id="PF07479">
    <property type="entry name" value="NAD_Gly3P_dh_C"/>
    <property type="match status" value="1"/>
</dbReference>
<dbReference type="Pfam" id="PF01210">
    <property type="entry name" value="NAD_Gly3P_dh_N"/>
    <property type="match status" value="1"/>
</dbReference>
<dbReference type="PIRSF" id="PIRSF000114">
    <property type="entry name" value="Glycerol-3-P_dh"/>
    <property type="match status" value="1"/>
</dbReference>
<dbReference type="PRINTS" id="PR00077">
    <property type="entry name" value="GPDHDRGNASE"/>
</dbReference>
<dbReference type="SUPFAM" id="SSF48179">
    <property type="entry name" value="6-phosphogluconate dehydrogenase C-terminal domain-like"/>
    <property type="match status" value="1"/>
</dbReference>
<dbReference type="SUPFAM" id="SSF51735">
    <property type="entry name" value="NAD(P)-binding Rossmann-fold domains"/>
    <property type="match status" value="1"/>
</dbReference>
<dbReference type="PROSITE" id="PS00957">
    <property type="entry name" value="NAD_G3PDH"/>
    <property type="match status" value="1"/>
</dbReference>
<gene>
    <name evidence="1" type="primary">gpsA</name>
    <name type="ordered locus">PFL_1741</name>
</gene>
<feature type="chain" id="PRO_0000255344" description="Glycerol-3-phosphate dehydrogenase [NAD(P)+]">
    <location>
        <begin position="1"/>
        <end position="341"/>
    </location>
</feature>
<feature type="active site" description="Proton acceptor" evidence="1">
    <location>
        <position position="191"/>
    </location>
</feature>
<feature type="binding site" evidence="1">
    <location>
        <position position="14"/>
    </location>
    <ligand>
        <name>NADPH</name>
        <dbReference type="ChEBI" id="CHEBI:57783"/>
    </ligand>
</feature>
<feature type="binding site" evidence="1">
    <location>
        <position position="15"/>
    </location>
    <ligand>
        <name>NADPH</name>
        <dbReference type="ChEBI" id="CHEBI:57783"/>
    </ligand>
</feature>
<feature type="binding site" evidence="1">
    <location>
        <position position="35"/>
    </location>
    <ligand>
        <name>NADPH</name>
        <dbReference type="ChEBI" id="CHEBI:57783"/>
    </ligand>
</feature>
<feature type="binding site" evidence="1">
    <location>
        <position position="108"/>
    </location>
    <ligand>
        <name>NADPH</name>
        <dbReference type="ChEBI" id="CHEBI:57783"/>
    </ligand>
</feature>
<feature type="binding site" evidence="1">
    <location>
        <position position="108"/>
    </location>
    <ligand>
        <name>sn-glycerol 3-phosphate</name>
        <dbReference type="ChEBI" id="CHEBI:57597"/>
    </ligand>
</feature>
<feature type="binding site" evidence="1">
    <location>
        <position position="136"/>
    </location>
    <ligand>
        <name>sn-glycerol 3-phosphate</name>
        <dbReference type="ChEBI" id="CHEBI:57597"/>
    </ligand>
</feature>
<feature type="binding site" evidence="1">
    <location>
        <position position="140"/>
    </location>
    <ligand>
        <name>NADPH</name>
        <dbReference type="ChEBI" id="CHEBI:57783"/>
    </ligand>
</feature>
<feature type="binding site" evidence="1">
    <location>
        <position position="191"/>
    </location>
    <ligand>
        <name>sn-glycerol 3-phosphate</name>
        <dbReference type="ChEBI" id="CHEBI:57597"/>
    </ligand>
</feature>
<feature type="binding site" evidence="1">
    <location>
        <position position="244"/>
    </location>
    <ligand>
        <name>sn-glycerol 3-phosphate</name>
        <dbReference type="ChEBI" id="CHEBI:57597"/>
    </ligand>
</feature>
<feature type="binding site" evidence="1">
    <location>
        <position position="254"/>
    </location>
    <ligand>
        <name>sn-glycerol 3-phosphate</name>
        <dbReference type="ChEBI" id="CHEBI:57597"/>
    </ligand>
</feature>
<feature type="binding site" evidence="1">
    <location>
        <position position="255"/>
    </location>
    <ligand>
        <name>NADPH</name>
        <dbReference type="ChEBI" id="CHEBI:57783"/>
    </ligand>
</feature>
<feature type="binding site" evidence="1">
    <location>
        <position position="255"/>
    </location>
    <ligand>
        <name>sn-glycerol 3-phosphate</name>
        <dbReference type="ChEBI" id="CHEBI:57597"/>
    </ligand>
</feature>
<feature type="binding site" evidence="1">
    <location>
        <position position="256"/>
    </location>
    <ligand>
        <name>sn-glycerol 3-phosphate</name>
        <dbReference type="ChEBI" id="CHEBI:57597"/>
    </ligand>
</feature>
<feature type="binding site" evidence="1">
    <location>
        <position position="279"/>
    </location>
    <ligand>
        <name>NADPH</name>
        <dbReference type="ChEBI" id="CHEBI:57783"/>
    </ligand>
</feature>
<feature type="binding site" evidence="1">
    <location>
        <position position="281"/>
    </location>
    <ligand>
        <name>NADPH</name>
        <dbReference type="ChEBI" id="CHEBI:57783"/>
    </ligand>
</feature>